<evidence type="ECO:0000250" key="1"/>
<evidence type="ECO:0000305" key="2"/>
<reference key="1">
    <citation type="journal article" date="2004" name="Proc. Natl. Acad. Sci. U.S.A.">
        <title>Complete genomes of two clinical Staphylococcus aureus strains: evidence for the rapid evolution of virulence and drug resistance.</title>
        <authorList>
            <person name="Holden M.T.G."/>
            <person name="Feil E.J."/>
            <person name="Lindsay J.A."/>
            <person name="Peacock S.J."/>
            <person name="Day N.P.J."/>
            <person name="Enright M.C."/>
            <person name="Foster T.J."/>
            <person name="Moore C.E."/>
            <person name="Hurst L."/>
            <person name="Atkin R."/>
            <person name="Barron A."/>
            <person name="Bason N."/>
            <person name="Bentley S.D."/>
            <person name="Chillingworth C."/>
            <person name="Chillingworth T."/>
            <person name="Churcher C."/>
            <person name="Clark L."/>
            <person name="Corton C."/>
            <person name="Cronin A."/>
            <person name="Doggett J."/>
            <person name="Dowd L."/>
            <person name="Feltwell T."/>
            <person name="Hance Z."/>
            <person name="Harris B."/>
            <person name="Hauser H."/>
            <person name="Holroyd S."/>
            <person name="Jagels K."/>
            <person name="James K.D."/>
            <person name="Lennard N."/>
            <person name="Line A."/>
            <person name="Mayes R."/>
            <person name="Moule S."/>
            <person name="Mungall K."/>
            <person name="Ormond D."/>
            <person name="Quail M.A."/>
            <person name="Rabbinowitsch E."/>
            <person name="Rutherford K.M."/>
            <person name="Sanders M."/>
            <person name="Sharp S."/>
            <person name="Simmonds M."/>
            <person name="Stevens K."/>
            <person name="Whitehead S."/>
            <person name="Barrell B.G."/>
            <person name="Spratt B.G."/>
            <person name="Parkhill J."/>
        </authorList>
    </citation>
    <scope>NUCLEOTIDE SEQUENCE [LARGE SCALE GENOMIC DNA]</scope>
    <source>
        <strain>MRSA252</strain>
    </source>
</reference>
<name>HEM2_STAAR</name>
<feature type="chain" id="PRO_0000140513" description="Delta-aminolevulinic acid dehydratase">
    <location>
        <begin position="1"/>
        <end position="324"/>
    </location>
</feature>
<feature type="active site" description="Schiff-base intermediate with substrate" evidence="1">
    <location>
        <position position="195"/>
    </location>
</feature>
<feature type="active site" description="Schiff-base intermediate with substrate" evidence="1">
    <location>
        <position position="248"/>
    </location>
</feature>
<feature type="binding site" evidence="1">
    <location>
        <position position="118"/>
    </location>
    <ligand>
        <name>Zn(2+)</name>
        <dbReference type="ChEBI" id="CHEBI:29105"/>
        <note>catalytic</note>
    </ligand>
</feature>
<feature type="binding site" evidence="1">
    <location>
        <position position="120"/>
    </location>
    <ligand>
        <name>Zn(2+)</name>
        <dbReference type="ChEBI" id="CHEBI:29105"/>
        <note>catalytic</note>
    </ligand>
</feature>
<feature type="binding site" evidence="1">
    <location>
        <position position="128"/>
    </location>
    <ligand>
        <name>Zn(2+)</name>
        <dbReference type="ChEBI" id="CHEBI:29105"/>
        <note>catalytic</note>
    </ligand>
</feature>
<feature type="binding site" evidence="1">
    <location>
        <position position="205"/>
    </location>
    <ligand>
        <name>5-aminolevulinate</name>
        <dbReference type="ChEBI" id="CHEBI:356416"/>
        <label>1</label>
    </ligand>
</feature>
<feature type="binding site" evidence="1">
    <location>
        <position position="217"/>
    </location>
    <ligand>
        <name>5-aminolevulinate</name>
        <dbReference type="ChEBI" id="CHEBI:356416"/>
        <label>1</label>
    </ligand>
</feature>
<feature type="binding site" evidence="1">
    <location>
        <position position="233"/>
    </location>
    <ligand>
        <name>Mg(2+)</name>
        <dbReference type="ChEBI" id="CHEBI:18420"/>
    </ligand>
</feature>
<feature type="binding site" evidence="1">
    <location>
        <position position="274"/>
    </location>
    <ligand>
        <name>5-aminolevulinate</name>
        <dbReference type="ChEBI" id="CHEBI:356416"/>
        <label>2</label>
    </ligand>
</feature>
<feature type="binding site" evidence="1">
    <location>
        <position position="313"/>
    </location>
    <ligand>
        <name>5-aminolevulinate</name>
        <dbReference type="ChEBI" id="CHEBI:356416"/>
        <label>2</label>
    </ligand>
</feature>
<organism>
    <name type="scientific">Staphylococcus aureus (strain MRSA252)</name>
    <dbReference type="NCBI Taxonomy" id="282458"/>
    <lineage>
        <taxon>Bacteria</taxon>
        <taxon>Bacillati</taxon>
        <taxon>Bacillota</taxon>
        <taxon>Bacilli</taxon>
        <taxon>Bacillales</taxon>
        <taxon>Staphylococcaceae</taxon>
        <taxon>Staphylococcus</taxon>
    </lineage>
</organism>
<comment type="function">
    <text evidence="1">Catalyzes an early step in the biosynthesis of tetrapyrroles. Binds two molecules of 5-aminolevulinate per subunit, each at a distinct site, and catalyzes their condensation to form porphobilinogen (By similarity).</text>
</comment>
<comment type="catalytic activity">
    <reaction>
        <text>2 5-aminolevulinate = porphobilinogen + 2 H2O + H(+)</text>
        <dbReference type="Rhea" id="RHEA:24064"/>
        <dbReference type="ChEBI" id="CHEBI:15377"/>
        <dbReference type="ChEBI" id="CHEBI:15378"/>
        <dbReference type="ChEBI" id="CHEBI:58126"/>
        <dbReference type="ChEBI" id="CHEBI:356416"/>
        <dbReference type="EC" id="4.2.1.24"/>
    </reaction>
</comment>
<comment type="cofactor">
    <cofactor evidence="1">
        <name>Zn(2+)</name>
        <dbReference type="ChEBI" id="CHEBI:29105"/>
    </cofactor>
    <text evidence="1">Binds 1 zinc ion per monomer.</text>
</comment>
<comment type="pathway">
    <text>Porphyrin-containing compound metabolism; protoporphyrin-IX biosynthesis; coproporphyrinogen-III from 5-aminolevulinate: step 1/4.</text>
</comment>
<comment type="subunit">
    <text evidence="1">Homooctamer.</text>
</comment>
<comment type="similarity">
    <text evidence="2">Belongs to the ALAD family.</text>
</comment>
<sequence length="324" mass="36583">MKFDRHRRLRSSATMRDMVRENHVRKEDLIYPIFVVEKDDVKKEIKSLPGVYQISLNLLESELKEAYDLGIRAIMFFGVPNSKDDIGTGAYIHDGVIQQATRIAKKMYDDLLIVADTCLCEYTDHGHCGVIDDHTHDVDNDKSLPLLVKTAISQVEAGADIIAPSNMMDGFVAEIRRGLDEAGYYNIPIMSYGVKYASSFFGPFRDAADSAPSFGDRKTYQMDPANRLEALRELESDLKEGCDMMIVKPALSYLDIVRDVKNHTNVPVVAYNVSGEYSMTKAAAQNGWIDEERVVMEQMVSMKRAGADMIITYFAKDICRYLDK</sequence>
<dbReference type="EC" id="4.2.1.24"/>
<dbReference type="EMBL" id="BX571856">
    <property type="protein sequence ID" value="CAG40739.1"/>
    <property type="molecule type" value="Genomic_DNA"/>
</dbReference>
<dbReference type="RefSeq" id="WP_000667126.1">
    <property type="nucleotide sequence ID" value="NC_002952.2"/>
</dbReference>
<dbReference type="SMR" id="Q6GG37"/>
<dbReference type="KEGG" id="sar:SAR1748"/>
<dbReference type="HOGENOM" id="CLU_035731_0_0_9"/>
<dbReference type="UniPathway" id="UPA00251">
    <property type="reaction ID" value="UER00318"/>
</dbReference>
<dbReference type="Proteomes" id="UP000000596">
    <property type="component" value="Chromosome"/>
</dbReference>
<dbReference type="GO" id="GO:0005829">
    <property type="term" value="C:cytosol"/>
    <property type="evidence" value="ECO:0007669"/>
    <property type="project" value="TreeGrafter"/>
</dbReference>
<dbReference type="GO" id="GO:0004655">
    <property type="term" value="F:porphobilinogen synthase activity"/>
    <property type="evidence" value="ECO:0007669"/>
    <property type="project" value="UniProtKB-EC"/>
</dbReference>
<dbReference type="GO" id="GO:0008270">
    <property type="term" value="F:zinc ion binding"/>
    <property type="evidence" value="ECO:0007669"/>
    <property type="project" value="TreeGrafter"/>
</dbReference>
<dbReference type="GO" id="GO:0006782">
    <property type="term" value="P:protoporphyrinogen IX biosynthetic process"/>
    <property type="evidence" value="ECO:0007669"/>
    <property type="project" value="UniProtKB-UniPathway"/>
</dbReference>
<dbReference type="CDD" id="cd00384">
    <property type="entry name" value="ALAD_PBGS"/>
    <property type="match status" value="1"/>
</dbReference>
<dbReference type="FunFam" id="3.20.20.70:FF:000019">
    <property type="entry name" value="Delta-aminolevulinic acid dehydratase"/>
    <property type="match status" value="1"/>
</dbReference>
<dbReference type="Gene3D" id="3.20.20.70">
    <property type="entry name" value="Aldolase class I"/>
    <property type="match status" value="1"/>
</dbReference>
<dbReference type="InterPro" id="IPR001731">
    <property type="entry name" value="ALAD"/>
</dbReference>
<dbReference type="InterPro" id="IPR030656">
    <property type="entry name" value="ALAD_AS"/>
</dbReference>
<dbReference type="InterPro" id="IPR013785">
    <property type="entry name" value="Aldolase_TIM"/>
</dbReference>
<dbReference type="NCBIfam" id="NF006762">
    <property type="entry name" value="PRK09283.1"/>
    <property type="match status" value="1"/>
</dbReference>
<dbReference type="PANTHER" id="PTHR11458">
    <property type="entry name" value="DELTA-AMINOLEVULINIC ACID DEHYDRATASE"/>
    <property type="match status" value="1"/>
</dbReference>
<dbReference type="PANTHER" id="PTHR11458:SF0">
    <property type="entry name" value="DELTA-AMINOLEVULINIC ACID DEHYDRATASE"/>
    <property type="match status" value="1"/>
</dbReference>
<dbReference type="Pfam" id="PF00490">
    <property type="entry name" value="ALAD"/>
    <property type="match status" value="1"/>
</dbReference>
<dbReference type="PIRSF" id="PIRSF001415">
    <property type="entry name" value="Porphbilin_synth"/>
    <property type="match status" value="1"/>
</dbReference>
<dbReference type="PRINTS" id="PR00144">
    <property type="entry name" value="DALDHYDRTASE"/>
</dbReference>
<dbReference type="SMART" id="SM01004">
    <property type="entry name" value="ALAD"/>
    <property type="match status" value="1"/>
</dbReference>
<dbReference type="SUPFAM" id="SSF51569">
    <property type="entry name" value="Aldolase"/>
    <property type="match status" value="1"/>
</dbReference>
<dbReference type="PROSITE" id="PS00169">
    <property type="entry name" value="D_ALA_DEHYDRATASE"/>
    <property type="match status" value="1"/>
</dbReference>
<gene>
    <name type="primary">hemB</name>
    <name type="ordered locus">SAR1748</name>
</gene>
<protein>
    <recommendedName>
        <fullName>Delta-aminolevulinic acid dehydratase</fullName>
        <shortName>ALAD</shortName>
        <shortName>ALADH</shortName>
        <ecNumber>4.2.1.24</ecNumber>
    </recommendedName>
    <alternativeName>
        <fullName>Porphobilinogen synthase</fullName>
    </alternativeName>
</protein>
<accession>Q6GG37</accession>
<proteinExistence type="inferred from homology"/>
<keyword id="KW-0350">Heme biosynthesis</keyword>
<keyword id="KW-0456">Lyase</keyword>
<keyword id="KW-0460">Magnesium</keyword>
<keyword id="KW-0479">Metal-binding</keyword>
<keyword id="KW-0627">Porphyrin biosynthesis</keyword>
<keyword id="KW-0862">Zinc</keyword>